<feature type="signal peptide" evidence="2">
    <location>
        <begin position="1"/>
        <end position="25"/>
    </location>
</feature>
<feature type="chain" id="PRO_0000296311" description="Non-specific lipid-transfer protein 2B">
    <location>
        <begin position="26"/>
        <end position="117"/>
    </location>
</feature>
<feature type="disulfide bond" evidence="1">
    <location>
        <begin position="29"/>
        <end position="76"/>
    </location>
</feature>
<feature type="disulfide bond" evidence="1">
    <location>
        <begin position="39"/>
        <end position="53"/>
    </location>
</feature>
<feature type="disulfide bond" evidence="1">
    <location>
        <begin position="54"/>
        <end position="99"/>
    </location>
</feature>
<feature type="disulfide bond" evidence="1">
    <location>
        <begin position="74"/>
        <end position="113"/>
    </location>
</feature>
<feature type="sequence conflict" description="In Ref. 6; X83434." evidence="4" ref="6">
    <original>V</original>
    <variation>L</variation>
    <location>
        <position position="7"/>
    </location>
</feature>
<feature type="sequence conflict" description="In Ref. 6; X83434." evidence="4" ref="6">
    <original>G</original>
    <variation>R</variation>
    <location>
        <position position="48"/>
    </location>
</feature>
<gene>
    <name type="primary">LTP2-B</name>
    <name type="synonym">LTPB-1</name>
    <name type="ordered locus">Os12g0115000</name>
    <name type="ordered locus">LOC_Os12g02310</name>
    <name type="ORF">OsJ_033643</name>
</gene>
<name>NLT2B_ORYSJ</name>
<sequence length="117" mass="11444">MARAQLVLVALVAALLLAGPHTTMAAISCGQVNSAVSPCLSYARGGSGPSAACCSGVRSLNSAATTTADRRTACNCLKNVAGSISGLNAGNAASIPSKCGVSIPYTISPSIDCSSVN</sequence>
<organism>
    <name type="scientific">Oryza sativa subsp. japonica</name>
    <name type="common">Rice</name>
    <dbReference type="NCBI Taxonomy" id="39947"/>
    <lineage>
        <taxon>Eukaryota</taxon>
        <taxon>Viridiplantae</taxon>
        <taxon>Streptophyta</taxon>
        <taxon>Embryophyta</taxon>
        <taxon>Tracheophyta</taxon>
        <taxon>Spermatophyta</taxon>
        <taxon>Magnoliopsida</taxon>
        <taxon>Liliopsida</taxon>
        <taxon>Poales</taxon>
        <taxon>Poaceae</taxon>
        <taxon>BOP clade</taxon>
        <taxon>Oryzoideae</taxon>
        <taxon>Oryzeae</taxon>
        <taxon>Oryzinae</taxon>
        <taxon>Oryza</taxon>
        <taxon>Oryza sativa</taxon>
    </lineage>
</organism>
<reference key="1">
    <citation type="journal article" date="2005" name="BMC Biol.">
        <title>The sequence of rice chromosomes 11 and 12, rich in disease resistance genes and recent gene duplications.</title>
        <authorList>
            <consortium name="The rice chromosomes 11 and 12 sequencing consortia"/>
        </authorList>
    </citation>
    <scope>NUCLEOTIDE SEQUENCE [LARGE SCALE GENOMIC DNA]</scope>
    <source>
        <strain>cv. Nipponbare</strain>
    </source>
</reference>
<reference key="2">
    <citation type="journal article" date="2005" name="Nature">
        <title>The map-based sequence of the rice genome.</title>
        <authorList>
            <consortium name="International rice genome sequencing project (IRGSP)"/>
        </authorList>
    </citation>
    <scope>NUCLEOTIDE SEQUENCE [LARGE SCALE GENOMIC DNA]</scope>
    <source>
        <strain>cv. Nipponbare</strain>
    </source>
</reference>
<reference key="3">
    <citation type="journal article" date="2008" name="Nucleic Acids Res.">
        <title>The rice annotation project database (RAP-DB): 2008 update.</title>
        <authorList>
            <consortium name="The rice annotation project (RAP)"/>
        </authorList>
    </citation>
    <scope>GENOME REANNOTATION</scope>
    <source>
        <strain>cv. Nipponbare</strain>
    </source>
</reference>
<reference key="4">
    <citation type="journal article" date="2013" name="Rice">
        <title>Improvement of the Oryza sativa Nipponbare reference genome using next generation sequence and optical map data.</title>
        <authorList>
            <person name="Kawahara Y."/>
            <person name="de la Bastide M."/>
            <person name="Hamilton J.P."/>
            <person name="Kanamori H."/>
            <person name="McCombie W.R."/>
            <person name="Ouyang S."/>
            <person name="Schwartz D.C."/>
            <person name="Tanaka T."/>
            <person name="Wu J."/>
            <person name="Zhou S."/>
            <person name="Childs K.L."/>
            <person name="Davidson R.M."/>
            <person name="Lin H."/>
            <person name="Quesada-Ocampo L."/>
            <person name="Vaillancourt B."/>
            <person name="Sakai H."/>
            <person name="Lee S.S."/>
            <person name="Kim J."/>
            <person name="Numa H."/>
            <person name="Itoh T."/>
            <person name="Buell C.R."/>
            <person name="Matsumoto T."/>
        </authorList>
    </citation>
    <scope>GENOME REANNOTATION</scope>
    <source>
        <strain>cv. Nipponbare</strain>
    </source>
</reference>
<reference key="5">
    <citation type="journal article" date="2005" name="PLoS Biol.">
        <title>The genomes of Oryza sativa: a history of duplications.</title>
        <authorList>
            <person name="Yu J."/>
            <person name="Wang J."/>
            <person name="Lin W."/>
            <person name="Li S."/>
            <person name="Li H."/>
            <person name="Zhou J."/>
            <person name="Ni P."/>
            <person name="Dong W."/>
            <person name="Hu S."/>
            <person name="Zeng C."/>
            <person name="Zhang J."/>
            <person name="Zhang Y."/>
            <person name="Li R."/>
            <person name="Xu Z."/>
            <person name="Li S."/>
            <person name="Li X."/>
            <person name="Zheng H."/>
            <person name="Cong L."/>
            <person name="Lin L."/>
            <person name="Yin J."/>
            <person name="Geng J."/>
            <person name="Li G."/>
            <person name="Shi J."/>
            <person name="Liu J."/>
            <person name="Lv H."/>
            <person name="Li J."/>
            <person name="Wang J."/>
            <person name="Deng Y."/>
            <person name="Ran L."/>
            <person name="Shi X."/>
            <person name="Wang X."/>
            <person name="Wu Q."/>
            <person name="Li C."/>
            <person name="Ren X."/>
            <person name="Wang J."/>
            <person name="Wang X."/>
            <person name="Li D."/>
            <person name="Liu D."/>
            <person name="Zhang X."/>
            <person name="Ji Z."/>
            <person name="Zhao W."/>
            <person name="Sun Y."/>
            <person name="Zhang Z."/>
            <person name="Bao J."/>
            <person name="Han Y."/>
            <person name="Dong L."/>
            <person name="Ji J."/>
            <person name="Chen P."/>
            <person name="Wu S."/>
            <person name="Liu J."/>
            <person name="Xiao Y."/>
            <person name="Bu D."/>
            <person name="Tan J."/>
            <person name="Yang L."/>
            <person name="Ye C."/>
            <person name="Zhang J."/>
            <person name="Xu J."/>
            <person name="Zhou Y."/>
            <person name="Yu Y."/>
            <person name="Zhang B."/>
            <person name="Zhuang S."/>
            <person name="Wei H."/>
            <person name="Liu B."/>
            <person name="Lei M."/>
            <person name="Yu H."/>
            <person name="Li Y."/>
            <person name="Xu H."/>
            <person name="Wei S."/>
            <person name="He X."/>
            <person name="Fang L."/>
            <person name="Zhang Z."/>
            <person name="Zhang Y."/>
            <person name="Huang X."/>
            <person name="Su Z."/>
            <person name="Tong W."/>
            <person name="Li J."/>
            <person name="Tong Z."/>
            <person name="Li S."/>
            <person name="Ye J."/>
            <person name="Wang L."/>
            <person name="Fang L."/>
            <person name="Lei T."/>
            <person name="Chen C.-S."/>
            <person name="Chen H.-C."/>
            <person name="Xu Z."/>
            <person name="Li H."/>
            <person name="Huang H."/>
            <person name="Zhang F."/>
            <person name="Xu H."/>
            <person name="Li N."/>
            <person name="Zhao C."/>
            <person name="Li S."/>
            <person name="Dong L."/>
            <person name="Huang Y."/>
            <person name="Li L."/>
            <person name="Xi Y."/>
            <person name="Qi Q."/>
            <person name="Li W."/>
            <person name="Zhang B."/>
            <person name="Hu W."/>
            <person name="Zhang Y."/>
            <person name="Tian X."/>
            <person name="Jiao Y."/>
            <person name="Liang X."/>
            <person name="Jin J."/>
            <person name="Gao L."/>
            <person name="Zheng W."/>
            <person name="Hao B."/>
            <person name="Liu S.-M."/>
            <person name="Wang W."/>
            <person name="Yuan L."/>
            <person name="Cao M."/>
            <person name="McDermott J."/>
            <person name="Samudrala R."/>
            <person name="Wang J."/>
            <person name="Wong G.K.-S."/>
            <person name="Yang H."/>
        </authorList>
    </citation>
    <scope>NUCLEOTIDE SEQUENCE [LARGE SCALE GENOMIC DNA]</scope>
    <source>
        <strain>cv. Nipponbare</strain>
    </source>
</reference>
<reference key="6">
    <citation type="journal article" date="1997" name="Gene">
        <title>Rice lipid transfer protein (LTP) genes belong to a complex multigene family and are differentially regulated.</title>
        <authorList>
            <person name="Vignols F."/>
            <person name="Wigger M."/>
            <person name="Garcia-Garrido J.M."/>
            <person name="Grellet F."/>
            <person name="Kader J.-C."/>
            <person name="Delseny M."/>
        </authorList>
    </citation>
    <scope>NUCLEOTIDE SEQUENCE [MRNA] OF 5-117</scope>
    <scope>TISSUE SPECIFICITY</scope>
    <scope>INDUCTION</scope>
    <source>
        <strain>cv. Nipponbare</strain>
    </source>
</reference>
<keyword id="KW-1015">Disulfide bond</keyword>
<keyword id="KW-0446">Lipid-binding</keyword>
<keyword id="KW-1185">Reference proteome</keyword>
<keyword id="KW-0732">Signal</keyword>
<keyword id="KW-0813">Transport</keyword>
<protein>
    <recommendedName>
        <fullName>Non-specific lipid-transfer protein 2B</fullName>
        <shortName>LTP 2B</shortName>
    </recommendedName>
    <alternativeName>
        <fullName>LTP B1</fullName>
    </alternativeName>
</protein>
<proteinExistence type="evidence at transcript level"/>
<comment type="function">
    <text>Plant non-specific lipid-transfer proteins transfer phospholipids as well as galactolipids across membranes. May play a role in wax or cutin deposition in the cell walls of expanding epidermal cells and certain secretory tissues.</text>
</comment>
<comment type="tissue specificity">
    <text evidence="3">Expressed in roots, mesocotyls and developing leaves.</text>
</comment>
<comment type="induction">
    <text evidence="3">By abscisic acid (ABA) and salicylic acid (SA). Down-regulated by salt treatment.</text>
</comment>
<comment type="similarity">
    <text evidence="4">Belongs to the plant LTP family.</text>
</comment>
<comment type="sequence caution" evidence="4">
    <conflict type="erroneous gene model prediction">
        <sequence resource="EMBL-CDS" id="BAF29005"/>
    </conflict>
</comment>
<accession>Q2QYL2</accession>
<accession>Q0IQL0</accession>
<evidence type="ECO:0000250" key="1"/>
<evidence type="ECO:0000255" key="2"/>
<evidence type="ECO:0000269" key="3">
    <source>
    </source>
</evidence>
<evidence type="ECO:0000305" key="4"/>
<dbReference type="EMBL" id="DP000011">
    <property type="protein sequence ID" value="ABA96283.1"/>
    <property type="molecule type" value="Genomic_DNA"/>
</dbReference>
<dbReference type="EMBL" id="AP008218">
    <property type="protein sequence ID" value="BAF29005.1"/>
    <property type="status" value="ALT_SEQ"/>
    <property type="molecule type" value="Genomic_DNA"/>
</dbReference>
<dbReference type="EMBL" id="AP014968">
    <property type="status" value="NOT_ANNOTATED_CDS"/>
    <property type="molecule type" value="Genomic_DNA"/>
</dbReference>
<dbReference type="EMBL" id="CM000149">
    <property type="protein sequence ID" value="EAZ19434.1"/>
    <property type="molecule type" value="Genomic_DNA"/>
</dbReference>
<dbReference type="EMBL" id="X83434">
    <property type="status" value="NOT_ANNOTATED_CDS"/>
    <property type="molecule type" value="mRNA"/>
</dbReference>
<dbReference type="RefSeq" id="XP_015620383.1">
    <property type="nucleotide sequence ID" value="XM_015764897.1"/>
</dbReference>
<dbReference type="SMR" id="Q2QYL2"/>
<dbReference type="FunCoup" id="Q2QYL2">
    <property type="interactions" value="603"/>
</dbReference>
<dbReference type="STRING" id="39947.Q2QYL2"/>
<dbReference type="Allergome" id="2788">
    <property type="allergen name" value="Ory s 14"/>
</dbReference>
<dbReference type="PaxDb" id="39947-Q2QYL2"/>
<dbReference type="KEGG" id="dosa:Os12g0115000"/>
<dbReference type="eggNOG" id="ENOG502S4CI">
    <property type="taxonomic scope" value="Eukaryota"/>
</dbReference>
<dbReference type="HOGENOM" id="CLU_128423_0_0_1"/>
<dbReference type="InParanoid" id="Q2QYL2"/>
<dbReference type="OrthoDB" id="770678at2759"/>
<dbReference type="Proteomes" id="UP000000763">
    <property type="component" value="Chromosome 12"/>
</dbReference>
<dbReference type="Proteomes" id="UP000007752">
    <property type="component" value="Chromosome 12"/>
</dbReference>
<dbReference type="Proteomes" id="UP000059680">
    <property type="component" value="Chromosome 12"/>
</dbReference>
<dbReference type="GO" id="GO:0008289">
    <property type="term" value="F:lipid binding"/>
    <property type="evidence" value="ECO:0007669"/>
    <property type="project" value="UniProtKB-KW"/>
</dbReference>
<dbReference type="GO" id="GO:0006869">
    <property type="term" value="P:lipid transport"/>
    <property type="evidence" value="ECO:0007669"/>
    <property type="project" value="InterPro"/>
</dbReference>
<dbReference type="CDD" id="cd01960">
    <property type="entry name" value="nsLTP1"/>
    <property type="match status" value="1"/>
</dbReference>
<dbReference type="Gene3D" id="1.10.110.10">
    <property type="entry name" value="Plant lipid-transfer and hydrophobic proteins"/>
    <property type="match status" value="1"/>
</dbReference>
<dbReference type="InterPro" id="IPR036312">
    <property type="entry name" value="Bifun_inhib/LTP/seed_sf"/>
</dbReference>
<dbReference type="InterPro" id="IPR016140">
    <property type="entry name" value="Bifunc_inhib/LTP/seed_store"/>
</dbReference>
<dbReference type="InterPro" id="IPR000528">
    <property type="entry name" value="Plant_nsLTP"/>
</dbReference>
<dbReference type="PANTHER" id="PTHR33076">
    <property type="entry name" value="NON-SPECIFIC LIPID-TRANSFER PROTEIN 2-RELATED"/>
    <property type="match status" value="1"/>
</dbReference>
<dbReference type="Pfam" id="PF00234">
    <property type="entry name" value="Tryp_alpha_amyl"/>
    <property type="match status" value="1"/>
</dbReference>
<dbReference type="PRINTS" id="PR00382">
    <property type="entry name" value="LIPIDTRNSFER"/>
</dbReference>
<dbReference type="SMART" id="SM00499">
    <property type="entry name" value="AAI"/>
    <property type="match status" value="1"/>
</dbReference>
<dbReference type="SUPFAM" id="SSF47699">
    <property type="entry name" value="Bifunctional inhibitor/lipid-transfer protein/seed storage 2S albumin"/>
    <property type="match status" value="1"/>
</dbReference>
<dbReference type="PROSITE" id="PS00597">
    <property type="entry name" value="PLANT_LTP"/>
    <property type="match status" value="1"/>
</dbReference>